<gene>
    <name evidence="1" type="primary">tsf</name>
    <name type="ordered locus">RPA2921</name>
</gene>
<reference key="1">
    <citation type="journal article" date="2004" name="Nat. Biotechnol.">
        <title>Complete genome sequence of the metabolically versatile photosynthetic bacterium Rhodopseudomonas palustris.</title>
        <authorList>
            <person name="Larimer F.W."/>
            <person name="Chain P."/>
            <person name="Hauser L."/>
            <person name="Lamerdin J.E."/>
            <person name="Malfatti S."/>
            <person name="Do L."/>
            <person name="Land M.L."/>
            <person name="Pelletier D.A."/>
            <person name="Beatty J.T."/>
            <person name="Lang A.S."/>
            <person name="Tabita F.R."/>
            <person name="Gibson J.L."/>
            <person name="Hanson T.E."/>
            <person name="Bobst C."/>
            <person name="Torres y Torres J.L."/>
            <person name="Peres C."/>
            <person name="Harrison F.H."/>
            <person name="Gibson J."/>
            <person name="Harwood C.S."/>
        </authorList>
    </citation>
    <scope>NUCLEOTIDE SEQUENCE [LARGE SCALE GENOMIC DNA]</scope>
    <source>
        <strain>ATCC BAA-98 / CGA009</strain>
    </source>
</reference>
<proteinExistence type="inferred from homology"/>
<protein>
    <recommendedName>
        <fullName evidence="1">Elongation factor Ts</fullName>
        <shortName evidence="1">EF-Ts</shortName>
    </recommendedName>
</protein>
<name>EFTS_RHOPA</name>
<comment type="function">
    <text evidence="1">Associates with the EF-Tu.GDP complex and induces the exchange of GDP to GTP. It remains bound to the aminoacyl-tRNA.EF-Tu.GTP complex up to the GTP hydrolysis stage on the ribosome.</text>
</comment>
<comment type="subcellular location">
    <subcellularLocation>
        <location evidence="1">Cytoplasm</location>
    </subcellularLocation>
</comment>
<comment type="similarity">
    <text evidence="1">Belongs to the EF-Ts family.</text>
</comment>
<accession>P61338</accession>
<sequence>MATITAAMVKELRETTGVGMMDCKQALAETDGNIDAAIDWLRKKGLSKAAKKAGRVAAEGLIGALTDGTKGVVIEVNSETDFVARNEQFQGLVKMIAQVALKVGADLDAINAAPVGSTTVAGAIADAIATIGENMTLRRAAALSVSQGVVASYIHNAVIDGAGKMGVIVALESAGKADELAVLGRQLAMHVAAANPQALDPTSLDPAVVQREREVMADKYRQQGKPENMIEKIVENGLKTYYKEVCLLEQAYIHDEKGKSVAQAVKEAEGKVGAPIKIVGFVRYALGEGIEKQTSDFAAEVAAASGQK</sequence>
<dbReference type="EMBL" id="BX572602">
    <property type="protein sequence ID" value="CAE28362.1"/>
    <property type="molecule type" value="Genomic_DNA"/>
</dbReference>
<dbReference type="RefSeq" id="WP_011158470.1">
    <property type="nucleotide sequence ID" value="NZ_CP116810.1"/>
</dbReference>
<dbReference type="SMR" id="P61338"/>
<dbReference type="STRING" id="258594.RPA2921"/>
<dbReference type="GeneID" id="66894003"/>
<dbReference type="eggNOG" id="COG0264">
    <property type="taxonomic scope" value="Bacteria"/>
</dbReference>
<dbReference type="HOGENOM" id="CLU_047155_2_0_5"/>
<dbReference type="PhylomeDB" id="P61338"/>
<dbReference type="GO" id="GO:0005737">
    <property type="term" value="C:cytoplasm"/>
    <property type="evidence" value="ECO:0007669"/>
    <property type="project" value="UniProtKB-SubCell"/>
</dbReference>
<dbReference type="GO" id="GO:0003746">
    <property type="term" value="F:translation elongation factor activity"/>
    <property type="evidence" value="ECO:0007669"/>
    <property type="project" value="UniProtKB-UniRule"/>
</dbReference>
<dbReference type="CDD" id="cd14275">
    <property type="entry name" value="UBA_EF-Ts"/>
    <property type="match status" value="1"/>
</dbReference>
<dbReference type="FunFam" id="1.10.286.20:FF:000001">
    <property type="entry name" value="Elongation factor Ts"/>
    <property type="match status" value="1"/>
</dbReference>
<dbReference type="FunFam" id="1.10.8.10:FF:000001">
    <property type="entry name" value="Elongation factor Ts"/>
    <property type="match status" value="1"/>
</dbReference>
<dbReference type="Gene3D" id="1.10.286.20">
    <property type="match status" value="1"/>
</dbReference>
<dbReference type="Gene3D" id="1.10.8.10">
    <property type="entry name" value="DNA helicase RuvA subunit, C-terminal domain"/>
    <property type="match status" value="1"/>
</dbReference>
<dbReference type="Gene3D" id="3.30.479.20">
    <property type="entry name" value="Elongation factor Ts, dimerisation domain"/>
    <property type="match status" value="2"/>
</dbReference>
<dbReference type="HAMAP" id="MF_00050">
    <property type="entry name" value="EF_Ts"/>
    <property type="match status" value="1"/>
</dbReference>
<dbReference type="InterPro" id="IPR036402">
    <property type="entry name" value="EF-Ts_dimer_sf"/>
</dbReference>
<dbReference type="InterPro" id="IPR001816">
    <property type="entry name" value="Transl_elong_EFTs/EF1B"/>
</dbReference>
<dbReference type="InterPro" id="IPR014039">
    <property type="entry name" value="Transl_elong_EFTs/EF1B_dimer"/>
</dbReference>
<dbReference type="InterPro" id="IPR018101">
    <property type="entry name" value="Transl_elong_Ts_CS"/>
</dbReference>
<dbReference type="InterPro" id="IPR009060">
    <property type="entry name" value="UBA-like_sf"/>
</dbReference>
<dbReference type="NCBIfam" id="TIGR00116">
    <property type="entry name" value="tsf"/>
    <property type="match status" value="1"/>
</dbReference>
<dbReference type="PANTHER" id="PTHR11741">
    <property type="entry name" value="ELONGATION FACTOR TS"/>
    <property type="match status" value="1"/>
</dbReference>
<dbReference type="PANTHER" id="PTHR11741:SF0">
    <property type="entry name" value="ELONGATION FACTOR TS, MITOCHONDRIAL"/>
    <property type="match status" value="1"/>
</dbReference>
<dbReference type="Pfam" id="PF00889">
    <property type="entry name" value="EF_TS"/>
    <property type="match status" value="1"/>
</dbReference>
<dbReference type="SUPFAM" id="SSF54713">
    <property type="entry name" value="Elongation factor Ts (EF-Ts), dimerisation domain"/>
    <property type="match status" value="2"/>
</dbReference>
<dbReference type="SUPFAM" id="SSF46934">
    <property type="entry name" value="UBA-like"/>
    <property type="match status" value="1"/>
</dbReference>
<dbReference type="PROSITE" id="PS01126">
    <property type="entry name" value="EF_TS_1"/>
    <property type="match status" value="1"/>
</dbReference>
<dbReference type="PROSITE" id="PS01127">
    <property type="entry name" value="EF_TS_2"/>
    <property type="match status" value="1"/>
</dbReference>
<feature type="chain" id="PRO_0000161183" description="Elongation factor Ts">
    <location>
        <begin position="1"/>
        <end position="308"/>
    </location>
</feature>
<feature type="region of interest" description="Involved in Mg(2+) ion dislocation from EF-Tu" evidence="1">
    <location>
        <begin position="80"/>
        <end position="83"/>
    </location>
</feature>
<organism>
    <name type="scientific">Rhodopseudomonas palustris (strain ATCC BAA-98 / CGA009)</name>
    <dbReference type="NCBI Taxonomy" id="258594"/>
    <lineage>
        <taxon>Bacteria</taxon>
        <taxon>Pseudomonadati</taxon>
        <taxon>Pseudomonadota</taxon>
        <taxon>Alphaproteobacteria</taxon>
        <taxon>Hyphomicrobiales</taxon>
        <taxon>Nitrobacteraceae</taxon>
        <taxon>Rhodopseudomonas</taxon>
    </lineage>
</organism>
<keyword id="KW-0963">Cytoplasm</keyword>
<keyword id="KW-0251">Elongation factor</keyword>
<keyword id="KW-0648">Protein biosynthesis</keyword>
<evidence type="ECO:0000255" key="1">
    <source>
        <dbReference type="HAMAP-Rule" id="MF_00050"/>
    </source>
</evidence>